<feature type="chain" id="PRO_0000283652" description="RNA-directed RNA polymerase">
    <location>
        <begin position="1"/>
        <end position="941"/>
    </location>
</feature>
<feature type="region of interest" description="Disordered" evidence="1">
    <location>
        <begin position="875"/>
        <end position="918"/>
    </location>
</feature>
<feature type="compositionally biased region" description="Low complexity" evidence="1">
    <location>
        <begin position="905"/>
        <end position="918"/>
    </location>
</feature>
<protein>
    <recommendedName>
        <fullName>RNA-directed RNA polymerase</fullName>
        <ecNumber>2.7.7.48</ecNumber>
    </recommendedName>
    <alternativeName>
        <fullName>p104</fullName>
    </alternativeName>
</protein>
<accession>Q07048</accession>
<evidence type="ECO:0000256" key="1">
    <source>
        <dbReference type="SAM" id="MobiDB-lite"/>
    </source>
</evidence>
<evidence type="ECO:0000269" key="2">
    <source>
    </source>
</evidence>
<evidence type="ECO:0000269" key="3">
    <source>
    </source>
</evidence>
<organism>
    <name type="scientific">Saccharomyces 23S RNA narnavirus</name>
    <name type="common">ScNV-23S</name>
    <dbReference type="NCBI Taxonomy" id="198599"/>
    <lineage>
        <taxon>Viruses</taxon>
        <taxon>Riboviria</taxon>
        <taxon>Orthornavirae</taxon>
        <taxon>Lenarviricota</taxon>
        <taxon>Amabiliviricetes</taxon>
        <taxon>Wolframvirales</taxon>
        <taxon>Narnaviridae</taxon>
        <taxon>Narnavirus</taxon>
    </lineage>
</organism>
<comment type="function">
    <text>RNA-directed RNA polymerase that replicates the viral (+) and (-) genome.</text>
</comment>
<comment type="catalytic activity">
    <reaction>
        <text>RNA(n) + a ribonucleoside 5'-triphosphate = RNA(n+1) + diphosphate</text>
        <dbReference type="Rhea" id="RHEA:21248"/>
        <dbReference type="Rhea" id="RHEA-COMP:14527"/>
        <dbReference type="Rhea" id="RHEA-COMP:17342"/>
        <dbReference type="ChEBI" id="CHEBI:33019"/>
        <dbReference type="ChEBI" id="CHEBI:61557"/>
        <dbReference type="ChEBI" id="CHEBI:140395"/>
        <dbReference type="EC" id="2.7.7.48"/>
    </reaction>
</comment>
<comment type="subunit">
    <text evidence="2 3">Forms a ribonucleoprotein complex with the 23S RNA, where a single polymerase molecule binds to a single viral RNA genome. Since the viral RNA is not encapsidated, ribonucleoprotein complex formation appears to be the strategy to survive in the host as persistent virus.</text>
</comment>
<comment type="subcellular location">
    <subcellularLocation>
        <location evidence="2">Host cytoplasm</location>
    </subcellularLocation>
    <text>The virus has no extracellular transmission pathway. It exists as a ribonucleoprotein viral particle in the host cytoplasm and can be transmitted through mating or cytoplasmic mixing (cytoduction).</text>
</comment>
<comment type="miscellaneous">
    <text>Yeast strains also contain a double-stranded RNA (dsRNA) called T. The (+)-strand of T is identical to the single-stranded 23S RNA. The T dsRNA seems to be a by-product of the viral RNA replication cycle.</text>
</comment>
<keyword id="KW-1035">Host cytoplasm</keyword>
<keyword id="KW-0548">Nucleotidyltransferase</keyword>
<keyword id="KW-0687">Ribonucleoprotein</keyword>
<keyword id="KW-0694">RNA-binding</keyword>
<keyword id="KW-0696">RNA-directed RNA polymerase</keyword>
<keyword id="KW-0808">Transferase</keyword>
<keyword id="KW-0693">Viral RNA replication</keyword>
<reference key="1">
    <citation type="journal article" date="1992" name="J. Biol. Chem.">
        <title>T double-stranded RNA (dsRNA) sequence reveals that T and W dsRNAs form a new RNA family in Saccharomyces cerevisiae.</title>
        <authorList>
            <person name="Esteban L.M."/>
            <person name="Rodriguez-Cousino N."/>
            <person name="Esteban R."/>
        </authorList>
    </citation>
    <scope>NUCLEOTIDE SEQUENCE [GENOMIC RNA]</scope>
</reference>
<reference key="2">
    <citation type="journal article" date="1998" name="J. Biol. Chem.">
        <title>Yeast positive-stranded virus-like RNA replicons. 20 S and 23 S RNA terminal nucleotide sequences and 3' end secondary structures resemble those of RNA coliphages.</title>
        <authorList>
            <person name="Rodriguez-Cousino N."/>
            <person name="Solorzano A."/>
            <person name="Fujimura T."/>
            <person name="Esteban R."/>
        </authorList>
    </citation>
    <scope>NUCLEOTIDE SEQUENCE [GENOMIC RNA]</scope>
</reference>
<reference key="3">
    <citation type="journal article" date="1994" name="J. Biol. Chem.">
        <title>Association of yeast viral 23 S RNA with its putative RNA-dependent RNA polymerase.</title>
        <authorList>
            <person name="Esteban L.M."/>
            <person name="Fujimura T."/>
            <person name="Garcia-Cuellar M."/>
            <person name="Esteban R."/>
        </authorList>
    </citation>
    <scope>SUBUNIT</scope>
</reference>
<reference key="4">
    <citation type="journal article" date="2000" name="J. Biol. Chem.">
        <title>Persistent yeast single-stranded RNA viruses exist in vivo as genomic RNA.RNA polymerase complexes in 1:1 stoichiometry.</title>
        <authorList>
            <person name="Solorzano A."/>
            <person name="Rodriguez-Cousino N."/>
            <person name="Esteban R."/>
            <person name="Fujimura T."/>
        </authorList>
    </citation>
    <scope>SUBCELLULAR LOCATION</scope>
    <scope>SUBUNIT</scope>
</reference>
<proteinExistence type="evidence at protein level"/>
<name>RDRP_SCV23</name>
<sequence>MHHKVNVKTQREVHFPMDLLQACGASAPRPVARVSRATDLDRRYRCVLSLPEERARSVGCKWSSTRAALRRGLEELGSREFRRRLRLADDCWRAICAAVCTGRKFPSFSVTDRPARARLAKVYRMGRRLLVGVVCRGESVVSDLKQECADLRRVIFEGSTRIPSSSLWGLVGVLGWTSPERAMQLTFIGRALPYGSPDVERRALASHAATLSIPAECHPNYLVAAEQFAKSWADDNLPRKFRIYPIAVQESSCMEYSRAQGGLLQSFRKGFVGYDPAAPSADPDDLELAKERGFSRIRASWYSTFRYRGELKSTNQSLEARVAVVPERGFKARIVTTHSASRVTFGHQFRRYLLQGIRRHPALVDVIGGDHRRAVETMDGDFGLLRPDGRLLSADLTSASDRIPHDLVKAILRGIFSDPDRRPPGTSLADVFDLVLGPYHLHYPDGSEVTVRQGILMGLPTTWPLLCLIHLFWVELSDWAPARPNHSRGFVLGESFRICGDDLIAWWRPERIALYNQIAVDCGAQFSAGKHLESKTWGIFTEKVFTVKPVKMKVRVRSEPSLKGYVFSRSSAFSCRMGGKGITGIRAARLYTIGAMPRWSRRIRDVYPGSLEHRTASQRYGEPVTVYRFGRWSSAIPLRWAVRAPTRTVGNPVQSLPDWFTVGPAASSVAADSNAFGAVSRVLRRMFPGLPRKLASAGIPPYLPRVFGGGGLVKSTGLTTKIGAVASRRWMSRIGHDLYRSRERKSTLGRVWTLSTSPAYAASLHEVEKFMDRPDIILTRKCRNPMLKHARELGLFEEVFESRVGGGILWASLNGKALVESHSPSILQVSRNLRRSLACPSGGFLRPSAPIGKLVQRHTLPRGTVWFLESSATDSARQGGMGLPPPPPPPLGGGGMAGPPPPPFMGLRPESSVPTSVPFTPSMFSERLAALESLFGRPPPS</sequence>
<organismHost>
    <name type="scientific">Saccharomyces cerevisiae</name>
    <name type="common">Baker's yeast</name>
    <dbReference type="NCBI Taxonomy" id="4932"/>
</organismHost>
<dbReference type="EC" id="2.7.7.48"/>
<dbReference type="EMBL" id="U90136">
    <property type="protein sequence ID" value="AAC98708.1"/>
    <property type="molecule type" value="Genomic_RNA"/>
</dbReference>
<dbReference type="PIR" id="A38149">
    <property type="entry name" value="A38149"/>
</dbReference>
<dbReference type="RefSeq" id="NP_660177.1">
    <property type="nucleotide sequence ID" value="NC_004050.1"/>
</dbReference>
<dbReference type="GeneID" id="949220"/>
<dbReference type="KEGG" id="vg:949220"/>
<dbReference type="OrthoDB" id="17768at10239"/>
<dbReference type="Proteomes" id="UP000007190">
    <property type="component" value="Genome"/>
</dbReference>
<dbReference type="GO" id="GO:0030430">
    <property type="term" value="C:host cell cytoplasm"/>
    <property type="evidence" value="ECO:0007669"/>
    <property type="project" value="UniProtKB-SubCell"/>
</dbReference>
<dbReference type="GO" id="GO:1990904">
    <property type="term" value="C:ribonucleoprotein complex"/>
    <property type="evidence" value="ECO:0007669"/>
    <property type="project" value="UniProtKB-KW"/>
</dbReference>
<dbReference type="GO" id="GO:0003723">
    <property type="term" value="F:RNA binding"/>
    <property type="evidence" value="ECO:0007669"/>
    <property type="project" value="UniProtKB-KW"/>
</dbReference>
<dbReference type="GO" id="GO:0003968">
    <property type="term" value="F:RNA-directed RNA polymerase activity"/>
    <property type="evidence" value="ECO:0007669"/>
    <property type="project" value="UniProtKB-KW"/>
</dbReference>
<dbReference type="InterPro" id="IPR043502">
    <property type="entry name" value="DNA/RNA_pol_sf"/>
</dbReference>
<dbReference type="SUPFAM" id="SSF56672">
    <property type="entry name" value="DNA/RNA polymerases"/>
    <property type="match status" value="1"/>
</dbReference>